<proteinExistence type="inferred from homology"/>
<comment type="function">
    <text evidence="1">Probable polyketide synthase.</text>
</comment>
<comment type="cofactor">
    <cofactor evidence="1">
        <name>pantetheine 4'-phosphate</name>
        <dbReference type="ChEBI" id="CHEBI:47942"/>
    </cofactor>
    <text evidence="1">Binds 1 phosphopantetheine covalently.</text>
</comment>
<comment type="domain">
    <text evidence="1">Modular protein that is responsible for the completion of one condensation-processing cycle. The beta-ketoacyl synthase region is responsible for the actual condensation reaction while the acyl/malonyl transferase region is responsible for incorporating carboxylic acids units onto an acyl carrier protein (ACP) domain (By similarity).</text>
</comment>
<comment type="miscellaneous">
    <text>Encoded by one of the numerous copies of polyketide synthase genes and clustered as a pair pks27/pks28 in chromosome 5.</text>
</comment>
<dbReference type="EC" id="2.3.1.-"/>
<dbReference type="EMBL" id="AAFI02000163">
    <property type="protein sequence ID" value="EAL62249.1"/>
    <property type="molecule type" value="Genomic_DNA"/>
</dbReference>
<dbReference type="RefSeq" id="XP_635742.1">
    <property type="nucleotide sequence ID" value="XM_630650.1"/>
</dbReference>
<dbReference type="SMR" id="Q54G30"/>
<dbReference type="STRING" id="44689.Q54G30"/>
<dbReference type="PaxDb" id="44689-DDB0235220"/>
<dbReference type="EnsemblProtists" id="EAL62249">
    <property type="protein sequence ID" value="EAL62249"/>
    <property type="gene ID" value="DDB_G0290467"/>
</dbReference>
<dbReference type="GeneID" id="8627660"/>
<dbReference type="KEGG" id="ddi:DDB_G0290467"/>
<dbReference type="dictyBase" id="DDB_G0290467">
    <property type="gene designation" value="pks27"/>
</dbReference>
<dbReference type="VEuPathDB" id="AmoebaDB:DDB_G0290467"/>
<dbReference type="eggNOG" id="KOG1202">
    <property type="taxonomic scope" value="Eukaryota"/>
</dbReference>
<dbReference type="HOGENOM" id="CLU_000022_31_5_1"/>
<dbReference type="InParanoid" id="Q54G30"/>
<dbReference type="OMA" id="ISECMPS"/>
<dbReference type="PhylomeDB" id="Q54G30"/>
<dbReference type="PRO" id="PR:Q54G30"/>
<dbReference type="Proteomes" id="UP000002195">
    <property type="component" value="Chromosome 5"/>
</dbReference>
<dbReference type="GO" id="GO:0004315">
    <property type="term" value="F:3-oxoacyl-[acyl-carrier-protein] synthase activity"/>
    <property type="evidence" value="ECO:0007669"/>
    <property type="project" value="InterPro"/>
</dbReference>
<dbReference type="GO" id="GO:0016491">
    <property type="term" value="F:oxidoreductase activity"/>
    <property type="evidence" value="ECO:0007669"/>
    <property type="project" value="InterPro"/>
</dbReference>
<dbReference type="GO" id="GO:0006633">
    <property type="term" value="P:fatty acid biosynthetic process"/>
    <property type="evidence" value="ECO:0000318"/>
    <property type="project" value="GO_Central"/>
</dbReference>
<dbReference type="CDD" id="cd02440">
    <property type="entry name" value="AdoMet_MTases"/>
    <property type="match status" value="1"/>
</dbReference>
<dbReference type="CDD" id="cd05195">
    <property type="entry name" value="enoyl_red"/>
    <property type="match status" value="1"/>
</dbReference>
<dbReference type="CDD" id="cd08954">
    <property type="entry name" value="KR_1_FAS_SDR_x"/>
    <property type="match status" value="1"/>
</dbReference>
<dbReference type="CDD" id="cd00833">
    <property type="entry name" value="PKS"/>
    <property type="match status" value="1"/>
</dbReference>
<dbReference type="FunFam" id="3.40.47.10:FF:000091">
    <property type="entry name" value="Probable polyketide synthase 32"/>
    <property type="match status" value="1"/>
</dbReference>
<dbReference type="FunFam" id="3.40.50.720:FF:000794">
    <property type="entry name" value="Probable polyketide synthase 33"/>
    <property type="match status" value="1"/>
</dbReference>
<dbReference type="Gene3D" id="3.40.47.10">
    <property type="match status" value="1"/>
</dbReference>
<dbReference type="Gene3D" id="1.10.1200.10">
    <property type="entry name" value="ACP-like"/>
    <property type="match status" value="1"/>
</dbReference>
<dbReference type="Gene3D" id="3.40.366.10">
    <property type="entry name" value="Malonyl-Coenzyme A Acyl Carrier Protein, domain 2"/>
    <property type="match status" value="1"/>
</dbReference>
<dbReference type="Gene3D" id="3.90.180.10">
    <property type="entry name" value="Medium-chain alcohol dehydrogenases, catalytic domain"/>
    <property type="match status" value="1"/>
</dbReference>
<dbReference type="Gene3D" id="3.40.50.720">
    <property type="entry name" value="NAD(P)-binding Rossmann-like Domain"/>
    <property type="match status" value="2"/>
</dbReference>
<dbReference type="Gene3D" id="3.10.129.110">
    <property type="entry name" value="Polyketide synthase dehydratase"/>
    <property type="match status" value="1"/>
</dbReference>
<dbReference type="Gene3D" id="3.40.50.150">
    <property type="entry name" value="Vaccinia Virus protein VP39"/>
    <property type="match status" value="1"/>
</dbReference>
<dbReference type="InterPro" id="IPR001227">
    <property type="entry name" value="Ac_transferase_dom_sf"/>
</dbReference>
<dbReference type="InterPro" id="IPR036736">
    <property type="entry name" value="ACP-like_sf"/>
</dbReference>
<dbReference type="InterPro" id="IPR014043">
    <property type="entry name" value="Acyl_transferase_dom"/>
</dbReference>
<dbReference type="InterPro" id="IPR016035">
    <property type="entry name" value="Acyl_Trfase/lysoPLipase"/>
</dbReference>
<dbReference type="InterPro" id="IPR013154">
    <property type="entry name" value="ADH-like_N"/>
</dbReference>
<dbReference type="InterPro" id="IPR011032">
    <property type="entry name" value="GroES-like_sf"/>
</dbReference>
<dbReference type="InterPro" id="IPR018201">
    <property type="entry name" value="Ketoacyl_synth_AS"/>
</dbReference>
<dbReference type="InterPro" id="IPR014031">
    <property type="entry name" value="Ketoacyl_synth_C"/>
</dbReference>
<dbReference type="InterPro" id="IPR014030">
    <property type="entry name" value="Ketoacyl_synth_N"/>
</dbReference>
<dbReference type="InterPro" id="IPR016036">
    <property type="entry name" value="Malonyl_transacylase_ACP-bd"/>
</dbReference>
<dbReference type="InterPro" id="IPR013217">
    <property type="entry name" value="Methyltransf_12"/>
</dbReference>
<dbReference type="InterPro" id="IPR036291">
    <property type="entry name" value="NAD(P)-bd_dom_sf"/>
</dbReference>
<dbReference type="InterPro" id="IPR032821">
    <property type="entry name" value="PKS_assoc"/>
</dbReference>
<dbReference type="InterPro" id="IPR020841">
    <property type="entry name" value="PKS_Beta-ketoAc_synthase_dom"/>
</dbReference>
<dbReference type="InterPro" id="IPR042104">
    <property type="entry name" value="PKS_dehydratase_sf"/>
</dbReference>
<dbReference type="InterPro" id="IPR020843">
    <property type="entry name" value="PKS_ER"/>
</dbReference>
<dbReference type="InterPro" id="IPR013968">
    <property type="entry name" value="PKS_KR"/>
</dbReference>
<dbReference type="InterPro" id="IPR049900">
    <property type="entry name" value="PKS_mFAS_DH"/>
</dbReference>
<dbReference type="InterPro" id="IPR050444">
    <property type="entry name" value="Polyketide_Synthase"/>
</dbReference>
<dbReference type="InterPro" id="IPR009081">
    <property type="entry name" value="PP-bd_ACP"/>
</dbReference>
<dbReference type="InterPro" id="IPR029063">
    <property type="entry name" value="SAM-dependent_MTases_sf"/>
</dbReference>
<dbReference type="InterPro" id="IPR016039">
    <property type="entry name" value="Thiolase-like"/>
</dbReference>
<dbReference type="PANTHER" id="PTHR45681:SF5">
    <property type="entry name" value="POLYKETIDE SYNTHASE 27-RELATED"/>
    <property type="match status" value="1"/>
</dbReference>
<dbReference type="PANTHER" id="PTHR45681">
    <property type="entry name" value="POLYKETIDE SYNTHASE 44-RELATED"/>
    <property type="match status" value="1"/>
</dbReference>
<dbReference type="Pfam" id="PF23297">
    <property type="entry name" value="ACP_SdgA_C"/>
    <property type="match status" value="1"/>
</dbReference>
<dbReference type="Pfam" id="PF00698">
    <property type="entry name" value="Acyl_transf_1"/>
    <property type="match status" value="1"/>
</dbReference>
<dbReference type="Pfam" id="PF08240">
    <property type="entry name" value="ADH_N"/>
    <property type="match status" value="1"/>
</dbReference>
<dbReference type="Pfam" id="PF13602">
    <property type="entry name" value="ADH_zinc_N_2"/>
    <property type="match status" value="1"/>
</dbReference>
<dbReference type="Pfam" id="PF16197">
    <property type="entry name" value="KAsynt_C_assoc"/>
    <property type="match status" value="1"/>
</dbReference>
<dbReference type="Pfam" id="PF00109">
    <property type="entry name" value="ketoacyl-synt"/>
    <property type="match status" value="1"/>
</dbReference>
<dbReference type="Pfam" id="PF02801">
    <property type="entry name" value="Ketoacyl-synt_C"/>
    <property type="match status" value="1"/>
</dbReference>
<dbReference type="Pfam" id="PF08659">
    <property type="entry name" value="KR"/>
    <property type="match status" value="1"/>
</dbReference>
<dbReference type="Pfam" id="PF08242">
    <property type="entry name" value="Methyltransf_12"/>
    <property type="match status" value="1"/>
</dbReference>
<dbReference type="SMART" id="SM00827">
    <property type="entry name" value="PKS_AT"/>
    <property type="match status" value="1"/>
</dbReference>
<dbReference type="SMART" id="SM00829">
    <property type="entry name" value="PKS_ER"/>
    <property type="match status" value="1"/>
</dbReference>
<dbReference type="SMART" id="SM00825">
    <property type="entry name" value="PKS_KS"/>
    <property type="match status" value="1"/>
</dbReference>
<dbReference type="SUPFAM" id="SSF47336">
    <property type="entry name" value="ACP-like"/>
    <property type="match status" value="1"/>
</dbReference>
<dbReference type="SUPFAM" id="SSF52151">
    <property type="entry name" value="FabD/lysophospholipase-like"/>
    <property type="match status" value="1"/>
</dbReference>
<dbReference type="SUPFAM" id="SSF50129">
    <property type="entry name" value="GroES-like"/>
    <property type="match status" value="1"/>
</dbReference>
<dbReference type="SUPFAM" id="SSF51735">
    <property type="entry name" value="NAD(P)-binding Rossmann-fold domains"/>
    <property type="match status" value="2"/>
</dbReference>
<dbReference type="SUPFAM" id="SSF55048">
    <property type="entry name" value="Probable ACP-binding domain of malonyl-CoA ACP transacylase"/>
    <property type="match status" value="1"/>
</dbReference>
<dbReference type="SUPFAM" id="SSF53335">
    <property type="entry name" value="S-adenosyl-L-methionine-dependent methyltransferases"/>
    <property type="match status" value="1"/>
</dbReference>
<dbReference type="SUPFAM" id="SSF53901">
    <property type="entry name" value="Thiolase-like"/>
    <property type="match status" value="1"/>
</dbReference>
<dbReference type="PROSITE" id="PS50075">
    <property type="entry name" value="CARRIER"/>
    <property type="match status" value="1"/>
</dbReference>
<dbReference type="PROSITE" id="PS00606">
    <property type="entry name" value="KS3_1"/>
    <property type="match status" value="1"/>
</dbReference>
<dbReference type="PROSITE" id="PS52004">
    <property type="entry name" value="KS3_2"/>
    <property type="match status" value="1"/>
</dbReference>
<dbReference type="PROSITE" id="PS52019">
    <property type="entry name" value="PKS_MFAS_DH"/>
    <property type="match status" value="1"/>
</dbReference>
<feature type="chain" id="PRO_0000369418" description="Probable polyketide synthase 27">
    <location>
        <begin position="1"/>
        <end position="2684"/>
    </location>
</feature>
<feature type="domain" description="Ketosynthase family 3 (KS3)" evidence="3">
    <location>
        <begin position="11"/>
        <end position="442"/>
    </location>
</feature>
<feature type="domain" description="PKS/mFAS DH" evidence="4">
    <location>
        <begin position="958"/>
        <end position="1276"/>
    </location>
</feature>
<feature type="domain" description="Carrier" evidence="2">
    <location>
        <begin position="2585"/>
        <end position="2662"/>
    </location>
</feature>
<feature type="region of interest" description="Acyl/malonyl transferases">
    <location>
        <begin position="650"/>
        <end position="683"/>
    </location>
</feature>
<feature type="region of interest" description="N-terminal hotdog fold" evidence="4">
    <location>
        <begin position="958"/>
        <end position="1087"/>
    </location>
</feature>
<feature type="region of interest" description="C-terminal hotdog fold" evidence="4">
    <location>
        <begin position="1104"/>
        <end position="1276"/>
    </location>
</feature>
<feature type="region of interest" description="Disordered" evidence="6">
    <location>
        <begin position="1202"/>
        <end position="1221"/>
    </location>
</feature>
<feature type="active site" description="For beta-ketoacyl synthase activity" evidence="3">
    <location>
        <position position="183"/>
    </location>
</feature>
<feature type="active site" description="For beta-ketoacyl synthase activity" evidence="3">
    <location>
        <position position="322"/>
    </location>
</feature>
<feature type="active site" description="For beta-ketoacyl synthase activity" evidence="3">
    <location>
        <position position="365"/>
    </location>
</feature>
<feature type="active site" description="For acyl/malonyl transferase activity" evidence="5">
    <location>
        <position position="660"/>
    </location>
</feature>
<feature type="active site" description="Proton acceptor; for dehydratase activity" evidence="4">
    <location>
        <position position="999"/>
    </location>
</feature>
<feature type="active site" description="Proton donor; for dehydratase activity" evidence="4">
    <location>
        <position position="1173"/>
    </location>
</feature>
<feature type="modified residue" description="O-(pantetheine 4'-phosphoryl)serine" evidence="2">
    <location>
        <position position="2622"/>
    </location>
</feature>
<reference key="1">
    <citation type="journal article" date="2005" name="Nature">
        <title>The genome of the social amoeba Dictyostelium discoideum.</title>
        <authorList>
            <person name="Eichinger L."/>
            <person name="Pachebat J.A."/>
            <person name="Gloeckner G."/>
            <person name="Rajandream M.A."/>
            <person name="Sucgang R."/>
            <person name="Berriman M."/>
            <person name="Song J."/>
            <person name="Olsen R."/>
            <person name="Szafranski K."/>
            <person name="Xu Q."/>
            <person name="Tunggal B."/>
            <person name="Kummerfeld S."/>
            <person name="Madera M."/>
            <person name="Konfortov B.A."/>
            <person name="Rivero F."/>
            <person name="Bankier A.T."/>
            <person name="Lehmann R."/>
            <person name="Hamlin N."/>
            <person name="Davies R."/>
            <person name="Gaudet P."/>
            <person name="Fey P."/>
            <person name="Pilcher K."/>
            <person name="Chen G."/>
            <person name="Saunders D."/>
            <person name="Sodergren E.J."/>
            <person name="Davis P."/>
            <person name="Kerhornou A."/>
            <person name="Nie X."/>
            <person name="Hall N."/>
            <person name="Anjard C."/>
            <person name="Hemphill L."/>
            <person name="Bason N."/>
            <person name="Farbrother P."/>
            <person name="Desany B."/>
            <person name="Just E."/>
            <person name="Morio T."/>
            <person name="Rost R."/>
            <person name="Churcher C.M."/>
            <person name="Cooper J."/>
            <person name="Haydock S."/>
            <person name="van Driessche N."/>
            <person name="Cronin A."/>
            <person name="Goodhead I."/>
            <person name="Muzny D.M."/>
            <person name="Mourier T."/>
            <person name="Pain A."/>
            <person name="Lu M."/>
            <person name="Harper D."/>
            <person name="Lindsay R."/>
            <person name="Hauser H."/>
            <person name="James K.D."/>
            <person name="Quiles M."/>
            <person name="Madan Babu M."/>
            <person name="Saito T."/>
            <person name="Buchrieser C."/>
            <person name="Wardroper A."/>
            <person name="Felder M."/>
            <person name="Thangavelu M."/>
            <person name="Johnson D."/>
            <person name="Knights A."/>
            <person name="Loulseged H."/>
            <person name="Mungall K.L."/>
            <person name="Oliver K."/>
            <person name="Price C."/>
            <person name="Quail M.A."/>
            <person name="Urushihara H."/>
            <person name="Hernandez J."/>
            <person name="Rabbinowitsch E."/>
            <person name="Steffen D."/>
            <person name="Sanders M."/>
            <person name="Ma J."/>
            <person name="Kohara Y."/>
            <person name="Sharp S."/>
            <person name="Simmonds M.N."/>
            <person name="Spiegler S."/>
            <person name="Tivey A."/>
            <person name="Sugano S."/>
            <person name="White B."/>
            <person name="Walker D."/>
            <person name="Woodward J.R."/>
            <person name="Winckler T."/>
            <person name="Tanaka Y."/>
            <person name="Shaulsky G."/>
            <person name="Schleicher M."/>
            <person name="Weinstock G.M."/>
            <person name="Rosenthal A."/>
            <person name="Cox E.C."/>
            <person name="Chisholm R.L."/>
            <person name="Gibbs R.A."/>
            <person name="Loomis W.F."/>
            <person name="Platzer M."/>
            <person name="Kay R.R."/>
            <person name="Williams J.G."/>
            <person name="Dear P.H."/>
            <person name="Noegel A.A."/>
            <person name="Barrell B.G."/>
            <person name="Kuspa A."/>
        </authorList>
    </citation>
    <scope>NUCLEOTIDE SEQUENCE [LARGE SCALE GENOMIC DNA]</scope>
    <source>
        <strain>AX4</strain>
    </source>
</reference>
<reference key="2">
    <citation type="journal article" date="2007" name="Bioinformatics">
        <title>Polyketide synthase genes and the natural products potential of Dictyostelium discoideum.</title>
        <authorList>
            <person name="Zucko J."/>
            <person name="Skunca N."/>
            <person name="Curk T."/>
            <person name="Zupan B."/>
            <person name="Long P.F."/>
            <person name="Cullum J."/>
            <person name="Kessin R.H."/>
            <person name="Hranueli D."/>
        </authorList>
    </citation>
    <scope>IDENTIFICATION</scope>
</reference>
<protein>
    <recommendedName>
        <fullName>Probable polyketide synthase 27</fullName>
        <shortName>dipks27</shortName>
        <ecNumber>2.3.1.-</ecNumber>
    </recommendedName>
</protein>
<accession>Q54G30</accession>
<evidence type="ECO:0000250" key="1"/>
<evidence type="ECO:0000255" key="2">
    <source>
        <dbReference type="PROSITE-ProRule" id="PRU00258"/>
    </source>
</evidence>
<evidence type="ECO:0000255" key="3">
    <source>
        <dbReference type="PROSITE-ProRule" id="PRU01348"/>
    </source>
</evidence>
<evidence type="ECO:0000255" key="4">
    <source>
        <dbReference type="PROSITE-ProRule" id="PRU01363"/>
    </source>
</evidence>
<evidence type="ECO:0000255" key="5">
    <source>
        <dbReference type="PROSITE-ProRule" id="PRU10022"/>
    </source>
</evidence>
<evidence type="ECO:0000256" key="6">
    <source>
        <dbReference type="SAM" id="MobiDB-lite"/>
    </source>
</evidence>
<name>PKS27_DICDI</name>
<keyword id="KW-0596">Phosphopantetheine</keyword>
<keyword id="KW-0597">Phosphoprotein</keyword>
<keyword id="KW-1185">Reference proteome</keyword>
<keyword id="KW-0808">Transferase</keyword>
<gene>
    <name type="primary">pks27</name>
    <name type="ORF">DDB_G0290467</name>
</gene>
<organism>
    <name type="scientific">Dictyostelium discoideum</name>
    <name type="common">Social amoeba</name>
    <dbReference type="NCBI Taxonomy" id="44689"/>
    <lineage>
        <taxon>Eukaryota</taxon>
        <taxon>Amoebozoa</taxon>
        <taxon>Evosea</taxon>
        <taxon>Eumycetozoa</taxon>
        <taxon>Dictyostelia</taxon>
        <taxon>Dictyosteliales</taxon>
        <taxon>Dictyosteliaceae</taxon>
        <taxon>Dictyostelium</taxon>
    </lineage>
</organism>
<sequence length="2684" mass="304919">MFGYNSNEEDCGDVAIIGIGLRFSSGDLNESISKPNQLFNSLLDGFNGIVNTSERWSDNYYLNGEINSVSAGLLPLDEWKRFDPIFFGINPSYDNVVTIDPQQRLLLKCVWEALEDSGIDPISLRGTNTSTFIGCSTTDYCSLQKSPFETQNNIFGSSNHSVANRIGYCFDFRGENFTIDSACSSSLNAINCGYNSIKSNKSNVSVVGGVNFILDPNISKSFTQLNILSPTGKCHSFSSDADGYVRSEGVGIVILKKLKDAIKDSNNIYCVIKGSSSNIDGNYDKLNFYSPSKSSQYENMKLAIKSTNGQINESDIDYCEAHGTGTPTGDPIELEGISRLFSHNNNNNNNNKQVLVGSIKSNIGHTEACSGVASLIKCCLMFKNKLFLQNINFKEPNPLINFKEWALKVVTEPIKFNENKTTVMLINNFGVTGSNVCLILSEFKEKRYNNNEYSSDNACEQIDIDSKVIEKKKFLIPLSSNSSTSLDNYKSIIVNNNYDDSNSSTRSFQEFVYNQIKFKSTSLIQKSVIIASDWNEFQDDDNQIKLKNSEGLISNITVEKKKSPLTVMVFCGQSSQYNKMALSLYENEPIFKESVNRFDKELFKYYGYSVLDRLRSVSDKDEISIHLPILAQPANIMIQISLYELYKHWGVSADIIVGHSLGEMSSSYSSGMIDFETLCYLIYHRSLAQNRTTGTGRMLSVNISYDEFIEKYQSKNNKYETLEIACYNSPTSIVIAGKEDLLNEISKEFKSNDIFCAMLGSLSSFHTSSQFMIKDEVCSLVFKSKLPSVPVFSTVTTNLFNDQTPYNANYVWENIYQPVSFTQTISNLYKHIESNDMGNEITFIEVAPHPTLQFYLNQMKSIQSSYFNHGKSVTIYSPLHKKKNDYNEFLKTISLLYVNNNFNINFKSQLTNINNNKIKSNSNSNSNKNNNKIIQFNDNNLPLYQWDDNEYFKLNPFHEKITSEGPPIQNLGNSIDSACSTYQTFIDIKKPPFQWLKGHQVSDKFYYPGMGYVQNLLSIYPNQDITISSLEFKSPLVLTEGNNQCLETTVSLLSKNEFNVKSHYKDQKTNQWILSSLGNFSLFKHNSINSEKLINIQALKDKCNFTTISKQEFYETIKIKTNLTYKGLFQGVKECSIGNNCSLAVVSLNEINNHTISNHSTIGRSLFNAATLDSCLHGSLIVVAQPIVLDRIEGFKLYSSNIPSSSSSSKDDNDCDSNNNNNSNNFIKELYVYTEAKAKTNYQSFSASVKIILPNGRLLMEISMVVCTSVSLVNPRSSIICKPPSNEIYTPWLQPKDSIINKPQQFKHLYSVDEFIAKEEDNQIISTELLLSLFYKHINVRCPTINLESLITLEYNQFKQLYYNNNGSVNENLFKFVFEILKSYSSNNILNHNNSENNNNENSNNESLYYFEQLYIKTTKIIAKQLFPLKDDDSFTDTPQSLFKNVYLDEFYKNFRAVQPLNNLLSEIIIEALKPILNQPIVFRILEAGGGTGSLSLLILEKICKLLNANPNSVIDIEFTWSDVSSSFFTEIKEKFSPFTAHKNFNIIHRVLDLEKPLFDQDLKPSYYDLVVISNVMHVVKKLKPTLDEIHNILTPNGQLLFIEPPYKSIYYDSIMGCFSQWWPSPDSDTELRPDRSCMNQEKWIKLLNETNYRDTIISGNDNLIFLIQTRKPSINEIISKQSSDSSLDQFNSFNKIILFGNNNNNGCSLQNSISSNQELKSKIININNFNEFQTWITNNYDNSDGFGNSKTLIIFLKSIEPINISNFKEITYEYIQINQLILKLELTNNFKHLLLSLDSTTDNYLSSSIIGAARYFVEYPQLDLYILNYDRISLKILNNSSGSSSSSSSSSSSSISGSSGSSYNSSNVSISSCKQQQLSLINYLINANNNIQKEFTINNNKVYYERYTRHSNKIKCNLQSKSFETNKDNLLIQLDSNLEYQLYSKRVEINSKEVEIEIKATGINYKDYLMHIGMVSSDLDLKYGKEYEVENGIGIENPMIGIDFSGIITRLGSDAERNKFKVGDHVCGVASKTSGSHVVIDYNFIYHQPLNYNHSISASIPSIYITSLHSIYGVGNLKSNESILIHSAASGIGISSLDLLKCKKHQGHIFLTVGSKDKEDYLIKNYGSFITAIYSSRNKDYVNEIKNKLIELGEVEQQGVDLILNTLSSEFMDSNFQCLNMSGRIVDLSVTHLTPNDYIVNNLFKYNMGYNNVEMLYFNGKMVRSYLKKIIKMINSNKLELSIPIIEYSNNQFKDAIEYVNQGKHIGKIIVNHNQDEFNRVYNNYQQNNNNNQIIMKHSYDISKLNMGKNILLTGQTGIILEIMKYLIRYSNHSIQNMIILSKSKLKWELELLINQTKFIKDNIIKFHFIQIDIEDSNKVNQVLNQLELNENITNIDSIIHFAFNNDIGDVQDVNMNRLNIAHGAKTIGAINLHNESINRSWKIKQFIIASSVASVLGSDQQCCYISACSVIDSLSKYRHSLGLPSLAINLGTIASTGFISRNNAIETMFKSSFLNLFSPQLVISSLDLFIQNQHQYPNYSLIDFNFEVMLTSPNYHLYKFDYEINIFKKSYQINTNFSSGSGSDNEFIHSTILNKISELLSIDESKVNEDLQLTQYGMDSLVIVQLKNFIDNQLGHNLITIHQLQHNKINQSIDIIKFGYLINKNKFKYKNNNINSPSEENF</sequence>